<dbReference type="EMBL" id="AY378165">
    <property type="protein sequence ID" value="AAR82893.1"/>
    <property type="molecule type" value="mRNA"/>
</dbReference>
<dbReference type="PDB" id="9BAQ">
    <property type="method" value="EM"/>
    <property type="resolution" value="2.79 A"/>
    <property type="chains" value="D/F=2-26"/>
</dbReference>
<dbReference type="PDBsum" id="9BAQ"/>
<dbReference type="EMDB" id="EMD-44411"/>
<dbReference type="SMR" id="Q5MYA4"/>
<dbReference type="GO" id="GO:0000786">
    <property type="term" value="C:nucleosome"/>
    <property type="evidence" value="ECO:0007669"/>
    <property type="project" value="UniProtKB-KW"/>
</dbReference>
<dbReference type="GO" id="GO:0005634">
    <property type="term" value="C:nucleus"/>
    <property type="evidence" value="ECO:0007669"/>
    <property type="project" value="UniProtKB-SubCell"/>
</dbReference>
<dbReference type="GO" id="GO:0003677">
    <property type="term" value="F:DNA binding"/>
    <property type="evidence" value="ECO:0007669"/>
    <property type="project" value="UniProtKB-KW"/>
</dbReference>
<dbReference type="GO" id="GO:0046982">
    <property type="term" value="F:protein heterodimerization activity"/>
    <property type="evidence" value="ECO:0007669"/>
    <property type="project" value="InterPro"/>
</dbReference>
<dbReference type="GO" id="GO:0030527">
    <property type="term" value="F:structural constituent of chromatin"/>
    <property type="evidence" value="ECO:0007669"/>
    <property type="project" value="InterPro"/>
</dbReference>
<dbReference type="CDD" id="cd22911">
    <property type="entry name" value="HFD_H3"/>
    <property type="match status" value="1"/>
</dbReference>
<dbReference type="FunFam" id="1.10.20.10:FF:000078">
    <property type="entry name" value="Histone H3"/>
    <property type="match status" value="1"/>
</dbReference>
<dbReference type="FunFam" id="1.10.20.10:FF:000044">
    <property type="entry name" value="Histone H3.3"/>
    <property type="match status" value="1"/>
</dbReference>
<dbReference type="Gene3D" id="1.10.20.10">
    <property type="entry name" value="Histone, subunit A"/>
    <property type="match status" value="1"/>
</dbReference>
<dbReference type="InterPro" id="IPR009072">
    <property type="entry name" value="Histone-fold"/>
</dbReference>
<dbReference type="InterPro" id="IPR007125">
    <property type="entry name" value="Histone_H2A/H2B/H3"/>
</dbReference>
<dbReference type="InterPro" id="IPR000164">
    <property type="entry name" value="Histone_H3/CENP-A"/>
</dbReference>
<dbReference type="PANTHER" id="PTHR11426">
    <property type="entry name" value="HISTONE H3"/>
    <property type="match status" value="1"/>
</dbReference>
<dbReference type="Pfam" id="PF00125">
    <property type="entry name" value="Histone"/>
    <property type="match status" value="1"/>
</dbReference>
<dbReference type="PRINTS" id="PR00622">
    <property type="entry name" value="HISTONEH3"/>
</dbReference>
<dbReference type="SMART" id="SM00428">
    <property type="entry name" value="H3"/>
    <property type="match status" value="1"/>
</dbReference>
<dbReference type="SUPFAM" id="SSF47113">
    <property type="entry name" value="Histone-fold"/>
    <property type="match status" value="1"/>
</dbReference>
<dbReference type="PROSITE" id="PS00322">
    <property type="entry name" value="HISTONE_H3_1"/>
    <property type="match status" value="1"/>
</dbReference>
<dbReference type="PROSITE" id="PS00959">
    <property type="entry name" value="HISTONE_H3_2"/>
    <property type="match status" value="1"/>
</dbReference>
<protein>
    <recommendedName>
        <fullName>Histone H3.2</fullName>
    </recommendedName>
</protein>
<proteinExistence type="evidence at protein level"/>
<feature type="initiator methionine" description="Removed" evidence="1">
    <location>
        <position position="1"/>
    </location>
</feature>
<feature type="chain" id="PRO_0000221273" description="Histone H3.2">
    <location>
        <begin position="2"/>
        <end position="136"/>
    </location>
</feature>
<feature type="region of interest" description="Disordered" evidence="2">
    <location>
        <begin position="1"/>
        <end position="20"/>
    </location>
</feature>
<feature type="modified residue" description="N6-methylated lysine" evidence="1">
    <location>
        <position position="5"/>
    </location>
</feature>
<feature type="modified residue" description="N6-acetyllysine; alternate" evidence="1">
    <location>
        <position position="10"/>
    </location>
</feature>
<feature type="modified residue" description="N6-methylated lysine; alternate" evidence="1">
    <location>
        <position position="10"/>
    </location>
</feature>
<feature type="modified residue" description="Phosphoserine" evidence="1">
    <location>
        <position position="11"/>
    </location>
</feature>
<feature type="modified residue" description="Phosphothreonine" evidence="1">
    <location>
        <position position="12"/>
    </location>
</feature>
<feature type="modified residue" description="N6-acetyllysine" evidence="1">
    <location>
        <position position="15"/>
    </location>
</feature>
<feature type="modified residue" description="N6-acetyllysine; alternate" evidence="1">
    <location>
        <position position="19"/>
    </location>
</feature>
<feature type="modified residue" description="N6-methylated lysine; alternate" evidence="1">
    <location>
        <position position="19"/>
    </location>
</feature>
<feature type="modified residue" description="N6-acetyllysine; alternate" evidence="1">
    <location>
        <position position="24"/>
    </location>
</feature>
<feature type="modified residue" description="N6-methylated lysine; alternate" evidence="1">
    <location>
        <position position="24"/>
    </location>
</feature>
<feature type="modified residue" description="N6-methylated lysine" evidence="1">
    <location>
        <position position="37"/>
    </location>
</feature>
<keyword id="KW-0002">3D-structure</keyword>
<keyword id="KW-0007">Acetylation</keyword>
<keyword id="KW-0158">Chromosome</keyword>
<keyword id="KW-0238">DNA-binding</keyword>
<keyword id="KW-0488">Methylation</keyword>
<keyword id="KW-0544">Nucleosome core</keyword>
<keyword id="KW-0539">Nucleus</keyword>
<keyword id="KW-0597">Phosphoprotein</keyword>
<sequence>MARTKQTARKSTGGKAPRKQLATKAWNTLATATGGVKKPHRFRPGTVALREIRKYQKSTELLIRKLPFQRLVREIAQDFKTDLRFQSSAVAALQEASEAYLVGLFEDTNLCAIHAKRVTIMPKDMQLARRIRGERA</sequence>
<evidence type="ECO:0000250" key="1"/>
<evidence type="ECO:0000256" key="2">
    <source>
        <dbReference type="SAM" id="MobiDB-lite"/>
    </source>
</evidence>
<evidence type="ECO:0000305" key="3"/>
<accession>Q5MYA4</accession>
<name>H32_CICIN</name>
<reference key="1">
    <citation type="submission" date="2003-09" db="EMBL/GenBank/DDBJ databases">
        <title>Identification and isolation of an histone H3 protein from chicory (Cichorium intybus L.) and mRNA expression under the influence of gibberellins, vernalization and light.</title>
        <authorList>
            <person name="Noten V."/>
            <person name="Loddewykx L."/>
            <person name="Van Stallen N."/>
            <person name="De Proft M."/>
        </authorList>
    </citation>
    <scope>NUCLEOTIDE SEQUENCE [MRNA]</scope>
</reference>
<comment type="function">
    <text>Core component of nucleosome. Nucleosomes wrap and compact DNA into chromatin, limiting DNA accessibility to the cellular machineries which require DNA as a template. Histones thereby play a central role in transcription regulation, DNA repair, DNA replication and chromosomal stability. DNA accessibility is regulated via a complex set of post-translational modifications of histones, also called histone code, and nucleosome remodeling.</text>
</comment>
<comment type="subunit">
    <text>The nucleosome is a histone octamer containing two molecules each of H2A, H2B, H3 and H4 assembled in one H3-H4 heterotetramer and two H2A-H2B heterodimers. The octamer wraps approximately 147 bp of DNA.</text>
</comment>
<comment type="subcellular location">
    <subcellularLocation>
        <location evidence="1">Nucleus</location>
    </subcellularLocation>
    <subcellularLocation>
        <location evidence="1">Chromosome</location>
    </subcellularLocation>
</comment>
<comment type="PTM">
    <text evidence="1">Acetylation is generally linked to gene activation. Can be acetylated to form H3K9ac, H3K14ac, H3K18ac and H3K23ac. H3K9ac could compete with H3K9me and prevent gene silencing. H3K9ac is restricted to euchromatin (By similarity).</text>
</comment>
<comment type="PTM">
    <text evidence="1">Methylated to form mainly H3K4me, H3K9me, H3K18me, H3K23me and H3K36me. H3K4me1/2/3, H3K9me3 and H3K36me1/2/3 are typical marks for euchromatin, whereas heterochromatic chromocenters are enriched in H3K9me1/2. H2BK143ub1 is probably prerequisite for H3K4me (By similarity).</text>
</comment>
<comment type="PTM">
    <text evidence="1">Can be phosphorylated to form H3S10ph and H3T11ph.</text>
</comment>
<comment type="similarity">
    <text evidence="3">Belongs to the histone H3 family.</text>
</comment>
<comment type="caution">
    <text evidence="3">To ensure consistency between histone entries, we follow the 'Brno' nomenclature for histone modifications, with positions referring to those used in the literature for the 'closest' model organism. Due to slight variations in histone sequences between organisms and to the presence of initiator methionine in UniProtKB/Swiss-Prot sequences, the actual positions of modified amino acids in the sequence generally differ. In this entry the following conventions are used: H3K4me = methylated Lys-5; H3K9ac = acetylated Lys-10; H3K9me = methylated Lys-10; H3S10ph = phosphorylated Ser-11; H3T11ph = phosphorylated Thr-12; H3K14ac = acetylated Lys-15; H3K18ac = acetylated Lys-19; H3K18me = methylated Lys-19; H3K23ac = acetylated Lys-24; H3K23me = methylated Lys-24; H3K36me = methylated Lys-37.</text>
</comment>
<organism>
    <name type="scientific">Cichorium intybus</name>
    <name type="common">Chicory</name>
    <dbReference type="NCBI Taxonomy" id="13427"/>
    <lineage>
        <taxon>Eukaryota</taxon>
        <taxon>Viridiplantae</taxon>
        <taxon>Streptophyta</taxon>
        <taxon>Embryophyta</taxon>
        <taxon>Tracheophyta</taxon>
        <taxon>Spermatophyta</taxon>
        <taxon>Magnoliopsida</taxon>
        <taxon>eudicotyledons</taxon>
        <taxon>Gunneridae</taxon>
        <taxon>Pentapetalae</taxon>
        <taxon>asterids</taxon>
        <taxon>campanulids</taxon>
        <taxon>Asterales</taxon>
        <taxon>Asteraceae</taxon>
        <taxon>Cichorioideae</taxon>
        <taxon>Cichorieae</taxon>
        <taxon>Cichoriinae</taxon>
        <taxon>Cichorium</taxon>
    </lineage>
</organism>